<proteinExistence type="inferred from homology"/>
<name>LGT_LACDB</name>
<reference key="1">
    <citation type="journal article" date="2006" name="Proc. Natl. Acad. Sci. U.S.A.">
        <title>Comparative genomics of the lactic acid bacteria.</title>
        <authorList>
            <person name="Makarova K.S."/>
            <person name="Slesarev A."/>
            <person name="Wolf Y.I."/>
            <person name="Sorokin A."/>
            <person name="Mirkin B."/>
            <person name="Koonin E.V."/>
            <person name="Pavlov A."/>
            <person name="Pavlova N."/>
            <person name="Karamychev V."/>
            <person name="Polouchine N."/>
            <person name="Shakhova V."/>
            <person name="Grigoriev I."/>
            <person name="Lou Y."/>
            <person name="Rohksar D."/>
            <person name="Lucas S."/>
            <person name="Huang K."/>
            <person name="Goodstein D.M."/>
            <person name="Hawkins T."/>
            <person name="Plengvidhya V."/>
            <person name="Welker D."/>
            <person name="Hughes J."/>
            <person name="Goh Y."/>
            <person name="Benson A."/>
            <person name="Baldwin K."/>
            <person name="Lee J.-H."/>
            <person name="Diaz-Muniz I."/>
            <person name="Dosti B."/>
            <person name="Smeianov V."/>
            <person name="Wechter W."/>
            <person name="Barabote R."/>
            <person name="Lorca G."/>
            <person name="Altermann E."/>
            <person name="Barrangou R."/>
            <person name="Ganesan B."/>
            <person name="Xie Y."/>
            <person name="Rawsthorne H."/>
            <person name="Tamir D."/>
            <person name="Parker C."/>
            <person name="Breidt F."/>
            <person name="Broadbent J.R."/>
            <person name="Hutkins R."/>
            <person name="O'Sullivan D."/>
            <person name="Steele J."/>
            <person name="Unlu G."/>
            <person name="Saier M.H. Jr."/>
            <person name="Klaenhammer T."/>
            <person name="Richardson P."/>
            <person name="Kozyavkin S."/>
            <person name="Weimer B.C."/>
            <person name="Mills D.A."/>
        </authorList>
    </citation>
    <scope>NUCLEOTIDE SEQUENCE [LARGE SCALE GENOMIC DNA]</scope>
    <source>
        <strain>ATCC BAA-365 / Lb-18</strain>
    </source>
</reference>
<organism>
    <name type="scientific">Lactobacillus delbrueckii subsp. bulgaricus (strain ATCC BAA-365 / Lb-18)</name>
    <dbReference type="NCBI Taxonomy" id="321956"/>
    <lineage>
        <taxon>Bacteria</taxon>
        <taxon>Bacillati</taxon>
        <taxon>Bacillota</taxon>
        <taxon>Bacilli</taxon>
        <taxon>Lactobacillales</taxon>
        <taxon>Lactobacillaceae</taxon>
        <taxon>Lactobacillus</taxon>
    </lineage>
</organism>
<comment type="function">
    <text evidence="1">Catalyzes the transfer of the diacylglyceryl group from phosphatidylglycerol to the sulfhydryl group of the N-terminal cysteine of a prolipoprotein, the first step in the formation of mature lipoproteins.</text>
</comment>
<comment type="catalytic activity">
    <reaction evidence="1">
        <text>L-cysteinyl-[prolipoprotein] + a 1,2-diacyl-sn-glycero-3-phospho-(1'-sn-glycerol) = an S-1,2-diacyl-sn-glyceryl-L-cysteinyl-[prolipoprotein] + sn-glycerol 1-phosphate + H(+)</text>
        <dbReference type="Rhea" id="RHEA:56712"/>
        <dbReference type="Rhea" id="RHEA-COMP:14679"/>
        <dbReference type="Rhea" id="RHEA-COMP:14680"/>
        <dbReference type="ChEBI" id="CHEBI:15378"/>
        <dbReference type="ChEBI" id="CHEBI:29950"/>
        <dbReference type="ChEBI" id="CHEBI:57685"/>
        <dbReference type="ChEBI" id="CHEBI:64716"/>
        <dbReference type="ChEBI" id="CHEBI:140658"/>
        <dbReference type="EC" id="2.5.1.145"/>
    </reaction>
</comment>
<comment type="pathway">
    <text evidence="1">Protein modification; lipoprotein biosynthesis (diacylglyceryl transfer).</text>
</comment>
<comment type="subcellular location">
    <subcellularLocation>
        <location evidence="1">Cell membrane</location>
        <topology evidence="1">Multi-pass membrane protein</topology>
    </subcellularLocation>
</comment>
<comment type="similarity">
    <text evidence="1">Belongs to the Lgt family.</text>
</comment>
<gene>
    <name evidence="1" type="primary">lgt</name>
    <name type="ordered locus">LBUL_0546</name>
</gene>
<accession>Q04BI8</accession>
<keyword id="KW-1003">Cell membrane</keyword>
<keyword id="KW-0472">Membrane</keyword>
<keyword id="KW-0808">Transferase</keyword>
<keyword id="KW-0812">Transmembrane</keyword>
<keyword id="KW-1133">Transmembrane helix</keyword>
<dbReference type="EC" id="2.5.1.145" evidence="1"/>
<dbReference type="EMBL" id="CP000412">
    <property type="protein sequence ID" value="ABJ58184.1"/>
    <property type="molecule type" value="Genomic_DNA"/>
</dbReference>
<dbReference type="RefSeq" id="WP_003618914.1">
    <property type="nucleotide sequence ID" value="NC_008529.1"/>
</dbReference>
<dbReference type="SMR" id="Q04BI8"/>
<dbReference type="KEGG" id="lbu:LBUL_0546"/>
<dbReference type="HOGENOM" id="CLU_013386_0_1_9"/>
<dbReference type="BioCyc" id="LDEL321956:LBUL_RS02600-MONOMER"/>
<dbReference type="UniPathway" id="UPA00664"/>
<dbReference type="GO" id="GO:0005886">
    <property type="term" value="C:plasma membrane"/>
    <property type="evidence" value="ECO:0007669"/>
    <property type="project" value="UniProtKB-SubCell"/>
</dbReference>
<dbReference type="GO" id="GO:0008961">
    <property type="term" value="F:phosphatidylglycerol-prolipoprotein diacylglyceryl transferase activity"/>
    <property type="evidence" value="ECO:0007669"/>
    <property type="project" value="UniProtKB-UniRule"/>
</dbReference>
<dbReference type="GO" id="GO:0042158">
    <property type="term" value="P:lipoprotein biosynthetic process"/>
    <property type="evidence" value="ECO:0007669"/>
    <property type="project" value="UniProtKB-UniRule"/>
</dbReference>
<dbReference type="HAMAP" id="MF_01147">
    <property type="entry name" value="Lgt"/>
    <property type="match status" value="1"/>
</dbReference>
<dbReference type="InterPro" id="IPR001640">
    <property type="entry name" value="Lgt"/>
</dbReference>
<dbReference type="NCBIfam" id="TIGR00544">
    <property type="entry name" value="lgt"/>
    <property type="match status" value="1"/>
</dbReference>
<dbReference type="PANTHER" id="PTHR30589:SF0">
    <property type="entry name" value="PHOSPHATIDYLGLYCEROL--PROLIPOPROTEIN DIACYLGLYCERYL TRANSFERASE"/>
    <property type="match status" value="1"/>
</dbReference>
<dbReference type="PANTHER" id="PTHR30589">
    <property type="entry name" value="PROLIPOPROTEIN DIACYLGLYCERYL TRANSFERASE"/>
    <property type="match status" value="1"/>
</dbReference>
<dbReference type="Pfam" id="PF01790">
    <property type="entry name" value="LGT"/>
    <property type="match status" value="1"/>
</dbReference>
<dbReference type="PROSITE" id="PS01311">
    <property type="entry name" value="LGT"/>
    <property type="match status" value="1"/>
</dbReference>
<sequence>MTLALNPIAFSIGDIHVRWYGIIIACGILLATFMSIREGQRRQIMSDDFIDLLLWGVPIGFIGARIYYVIFEWGYFSQHPDEIIAIWNGGIAIYGGLIAGAIVLLVFCYRRFLPPFLVLDIVAPGVMAAQVLGRWGNFMNQEAHGAKCSLQYLQNLHLPQFIIDQMYINGSYYKPTFLYESFFNLIGLIIILSLRHKKHLFKQGEVFMLYLAWYSVVRFFVEGMRTDSLYIFGVIRVSQALSLLLLIAVVILFVYRRVKVKPKWYLEGSGLKYPYER</sequence>
<feature type="chain" id="PRO_1000053445" description="Phosphatidylglycerol--prolipoprotein diacylglyceryl transferase">
    <location>
        <begin position="1"/>
        <end position="277"/>
    </location>
</feature>
<feature type="transmembrane region" description="Helical" evidence="1">
    <location>
        <begin position="15"/>
        <end position="35"/>
    </location>
</feature>
<feature type="transmembrane region" description="Helical" evidence="1">
    <location>
        <begin position="50"/>
        <end position="70"/>
    </location>
</feature>
<feature type="transmembrane region" description="Helical" evidence="1">
    <location>
        <begin position="89"/>
        <end position="109"/>
    </location>
</feature>
<feature type="transmembrane region" description="Helical" evidence="1">
    <location>
        <begin position="112"/>
        <end position="132"/>
    </location>
</feature>
<feature type="transmembrane region" description="Helical" evidence="1">
    <location>
        <begin position="174"/>
        <end position="194"/>
    </location>
</feature>
<feature type="transmembrane region" description="Helical" evidence="1">
    <location>
        <begin position="204"/>
        <end position="224"/>
    </location>
</feature>
<feature type="transmembrane region" description="Helical" evidence="1">
    <location>
        <begin position="234"/>
        <end position="254"/>
    </location>
</feature>
<feature type="binding site" evidence="1">
    <location>
        <position position="134"/>
    </location>
    <ligand>
        <name>a 1,2-diacyl-sn-glycero-3-phospho-(1'-sn-glycerol)</name>
        <dbReference type="ChEBI" id="CHEBI:64716"/>
    </ligand>
</feature>
<evidence type="ECO:0000255" key="1">
    <source>
        <dbReference type="HAMAP-Rule" id="MF_01147"/>
    </source>
</evidence>
<protein>
    <recommendedName>
        <fullName evidence="1">Phosphatidylglycerol--prolipoprotein diacylglyceryl transferase</fullName>
        <ecNumber evidence="1">2.5.1.145</ecNumber>
    </recommendedName>
</protein>